<accession>I3R794</accession>
<accession>P71402</accession>
<dbReference type="EC" id="3.4.21.-"/>
<dbReference type="EMBL" id="D64073">
    <property type="protein sequence ID" value="BAA10958.1"/>
    <property type="molecule type" value="Genomic_DNA"/>
</dbReference>
<dbReference type="EMBL" id="CP001868">
    <property type="protein sequence ID" value="AFK20104.1"/>
    <property type="molecule type" value="Genomic_DNA"/>
</dbReference>
<dbReference type="EMBL" id="AOLO01000011">
    <property type="protein sequence ID" value="ELZ99650.1"/>
    <property type="molecule type" value="Genomic_DNA"/>
</dbReference>
<dbReference type="PIR" id="S71451">
    <property type="entry name" value="S71451"/>
</dbReference>
<dbReference type="RefSeq" id="WP_004059827.1">
    <property type="nucleotide sequence ID" value="NC_017941.2"/>
</dbReference>
<dbReference type="SMR" id="I3R794"/>
<dbReference type="STRING" id="523841.HFX_2419"/>
<dbReference type="MEROPS" id="S08.102"/>
<dbReference type="PaxDb" id="523841-HFX_2419"/>
<dbReference type="GeneID" id="40157691"/>
<dbReference type="KEGG" id="hme:HFX_2419"/>
<dbReference type="eggNOG" id="arCOG00702">
    <property type="taxonomic scope" value="Archaea"/>
</dbReference>
<dbReference type="HOGENOM" id="CLU_011263_15_0_2"/>
<dbReference type="OrthoDB" id="27270at2157"/>
<dbReference type="Proteomes" id="UP000006469">
    <property type="component" value="Chromosome"/>
</dbReference>
<dbReference type="Proteomes" id="UP000011603">
    <property type="component" value="Unassembled WGS sequence"/>
</dbReference>
<dbReference type="GO" id="GO:0005576">
    <property type="term" value="C:extracellular region"/>
    <property type="evidence" value="ECO:0007669"/>
    <property type="project" value="UniProtKB-SubCell"/>
</dbReference>
<dbReference type="GO" id="GO:0004252">
    <property type="term" value="F:serine-type endopeptidase activity"/>
    <property type="evidence" value="ECO:0007669"/>
    <property type="project" value="InterPro"/>
</dbReference>
<dbReference type="GO" id="GO:0006508">
    <property type="term" value="P:proteolysis"/>
    <property type="evidence" value="ECO:0007669"/>
    <property type="project" value="UniProtKB-KW"/>
</dbReference>
<dbReference type="CDD" id="cd07484">
    <property type="entry name" value="Peptidases_S8_Thermitase_like"/>
    <property type="match status" value="1"/>
</dbReference>
<dbReference type="Gene3D" id="2.60.120.380">
    <property type="match status" value="1"/>
</dbReference>
<dbReference type="Gene3D" id="3.40.50.200">
    <property type="entry name" value="Peptidase S8/S53 domain"/>
    <property type="match status" value="1"/>
</dbReference>
<dbReference type="InterPro" id="IPR007280">
    <property type="entry name" value="Peptidase_C_arc/bac"/>
</dbReference>
<dbReference type="InterPro" id="IPR000209">
    <property type="entry name" value="Peptidase_S8/S53_dom"/>
</dbReference>
<dbReference type="InterPro" id="IPR036852">
    <property type="entry name" value="Peptidase_S8/S53_dom_sf"/>
</dbReference>
<dbReference type="InterPro" id="IPR022398">
    <property type="entry name" value="Peptidase_S8_His-AS"/>
</dbReference>
<dbReference type="InterPro" id="IPR023828">
    <property type="entry name" value="Peptidase_S8_Ser-AS"/>
</dbReference>
<dbReference type="InterPro" id="IPR050131">
    <property type="entry name" value="Peptidase_S8_subtilisin-like"/>
</dbReference>
<dbReference type="InterPro" id="IPR015500">
    <property type="entry name" value="Peptidase_S8_subtilisin-rel"/>
</dbReference>
<dbReference type="InterPro" id="IPR006311">
    <property type="entry name" value="TAT_signal"/>
</dbReference>
<dbReference type="InterPro" id="IPR034084">
    <property type="entry name" value="Thermitase-like_dom"/>
</dbReference>
<dbReference type="PANTHER" id="PTHR43806:SF11">
    <property type="entry name" value="CEREVISIN-RELATED"/>
    <property type="match status" value="1"/>
</dbReference>
<dbReference type="PANTHER" id="PTHR43806">
    <property type="entry name" value="PEPTIDASE S8"/>
    <property type="match status" value="1"/>
</dbReference>
<dbReference type="Pfam" id="PF00082">
    <property type="entry name" value="Peptidase_S8"/>
    <property type="match status" value="1"/>
</dbReference>
<dbReference type="Pfam" id="PF04151">
    <property type="entry name" value="PPC"/>
    <property type="match status" value="1"/>
</dbReference>
<dbReference type="PRINTS" id="PR00723">
    <property type="entry name" value="SUBTILISIN"/>
</dbReference>
<dbReference type="SUPFAM" id="SSF52743">
    <property type="entry name" value="Subtilisin-like"/>
    <property type="match status" value="1"/>
</dbReference>
<dbReference type="PROSITE" id="PS51892">
    <property type="entry name" value="SUBTILASE"/>
    <property type="match status" value="1"/>
</dbReference>
<dbReference type="PROSITE" id="PS00137">
    <property type="entry name" value="SUBTILASE_HIS"/>
    <property type="match status" value="1"/>
</dbReference>
<dbReference type="PROSITE" id="PS00138">
    <property type="entry name" value="SUBTILASE_SER"/>
    <property type="match status" value="1"/>
</dbReference>
<dbReference type="PROSITE" id="PS51318">
    <property type="entry name" value="TAT"/>
    <property type="match status" value="1"/>
</dbReference>
<protein>
    <recommendedName>
        <fullName>Halolysin</fullName>
        <ecNumber>3.4.21.-</ecNumber>
    </recommendedName>
    <alternativeName>
        <fullName>Halophilic serine protease</fullName>
    </alternativeName>
</protein>
<name>HLY_HALMT</name>
<organism>
    <name type="scientific">Haloferax mediterranei (strain ATCC 33500 / DSM 1411 / JCM 8866 / NBRC 14739 / NCIMB 2177 / R-4)</name>
    <name type="common">Halobacterium mediterranei</name>
    <dbReference type="NCBI Taxonomy" id="523841"/>
    <lineage>
        <taxon>Archaea</taxon>
        <taxon>Methanobacteriati</taxon>
        <taxon>Methanobacteriota</taxon>
        <taxon>Stenosarchaea group</taxon>
        <taxon>Halobacteria</taxon>
        <taxon>Halobacteriales</taxon>
        <taxon>Haloferacaceae</taxon>
        <taxon>Haloferax</taxon>
    </lineage>
</organism>
<comment type="function">
    <text evidence="5">Probable secreted halophilic serine protease showing proteolytic activity toward the protease general substrate azocasein.</text>
</comment>
<comment type="subcellular location">
    <subcellularLocation>
        <location evidence="1">Secreted</location>
    </subcellularLocation>
</comment>
<comment type="PTM">
    <text>Predicted to be exported by the Tat system. The position of the signal peptide cleavage has not been experimentally proven.</text>
</comment>
<comment type="similarity">
    <text evidence="6">Belongs to the peptidase S8 family.</text>
</comment>
<feature type="signal peptide" description="Tat-type signal" evidence="2">
    <location>
        <begin position="1"/>
        <end position="27"/>
    </location>
</feature>
<feature type="propeptide" id="PRO_0000428908" evidence="5">
    <location>
        <begin position="28"/>
        <end position="116"/>
    </location>
</feature>
<feature type="chain" id="PRO_0000428909" description="Halolysin">
    <location>
        <begin position="117"/>
        <end position="519"/>
    </location>
</feature>
<feature type="domain" description="Peptidase S8" evidence="3">
    <location>
        <begin position="127"/>
        <end position="400"/>
    </location>
</feature>
<feature type="region of interest" description="Disordered" evidence="4">
    <location>
        <begin position="386"/>
        <end position="425"/>
    </location>
</feature>
<feature type="compositionally biased region" description="Gly residues" evidence="4">
    <location>
        <begin position="405"/>
        <end position="415"/>
    </location>
</feature>
<feature type="active site" description="Charge relay system" evidence="3">
    <location>
        <position position="154"/>
    </location>
</feature>
<feature type="active site" description="Charge relay system" evidence="3">
    <location>
        <position position="193"/>
    </location>
</feature>
<feature type="active site" description="Charge relay system" evidence="3">
    <location>
        <position position="347"/>
    </location>
</feature>
<feature type="mutagenesis site" description="Decreases stability in hypotonic solutions." evidence="5">
    <original>C</original>
    <variation>S</variation>
    <location>
        <position position="432"/>
    </location>
</feature>
<feature type="mutagenesis site" description="Decreases stability in hypotonic solutions." evidence="5">
    <original>C</original>
    <variation>S</variation>
    <location>
        <position position="468"/>
    </location>
</feature>
<feature type="sequence conflict" description="In Ref. 1; BAA10958." evidence="6" ref="1">
    <original>G</original>
    <variation>V</variation>
    <location>
        <position position="257"/>
    </location>
</feature>
<feature type="sequence conflict" description="In Ref. 1; BAA10958." evidence="6" ref="1">
    <original>D</original>
    <variation>G</variation>
    <location>
        <position position="370"/>
    </location>
</feature>
<gene>
    <name type="primary">hly</name>
    <name type="ordered locus">HFX_2419</name>
    <name type="ORF">C439_13889</name>
</gene>
<reference key="1">
    <citation type="journal article" date="1996" name="Biochim. Biophys. Acta">
        <title>Halolysin R4, a serine proteinase from the halophilic archaeon Haloferax mediterranei; gene cloning, expression and structural studies.</title>
        <authorList>
            <person name="Kamekura M."/>
            <person name="Seno Y."/>
            <person name="Dyall-Smith M."/>
        </authorList>
    </citation>
    <scope>NUCLEOTIDE SEQUENCE [GENOMIC DNA]</scope>
    <scope>PROTEIN SEQUENCE OF 117-136</scope>
    <scope>FUNCTION</scope>
    <scope>CATALYTIC ACTIVITY</scope>
    <scope>MUTAGENESIS OF CYS-432 AND CYS-468</scope>
    <source>
        <strain>ATCC 33500 / DSM 1411 / JCM 8866 / NBRC 14739 / NCIMB 2177 / R-4</strain>
    </source>
</reference>
<reference key="2">
    <citation type="journal article" date="2012" name="J. Bacteriol.">
        <title>Complete genome sequence of the metabolically versatile halophilic archaeon Haloferax mediterranei, a poly(3-hydroxybutyrate-co-3-hydroxyvalerate) producer.</title>
        <authorList>
            <person name="Han J."/>
            <person name="Zhang F."/>
            <person name="Hou J."/>
            <person name="Liu X."/>
            <person name="Li M."/>
            <person name="Liu H."/>
            <person name="Cai L."/>
            <person name="Zhang B."/>
            <person name="Chen Y."/>
            <person name="Zhou J."/>
            <person name="Hu S."/>
            <person name="Xiang H."/>
        </authorList>
    </citation>
    <scope>NUCLEOTIDE SEQUENCE [LARGE SCALE GENOMIC DNA]</scope>
    <source>
        <strain>ATCC 33500 / DSM 1411 / JCM 8866 / NBRC 14739 / NCIMB 2177 / R-4</strain>
    </source>
</reference>
<reference key="3">
    <citation type="journal article" date="2014" name="PLoS Genet.">
        <title>Phylogenetically driven sequencing of extremely halophilic archaea reveals strategies for static and dynamic osmo-response.</title>
        <authorList>
            <person name="Becker E.A."/>
            <person name="Seitzer P.M."/>
            <person name="Tritt A."/>
            <person name="Larsen D."/>
            <person name="Krusor M."/>
            <person name="Yao A.I."/>
            <person name="Wu D."/>
            <person name="Madern D."/>
            <person name="Eisen J.A."/>
            <person name="Darling A.E."/>
            <person name="Facciotti M.T."/>
        </authorList>
    </citation>
    <scope>NUCLEOTIDE SEQUENCE [LARGE SCALE GENOMIC DNA]</scope>
    <source>
        <strain>ATCC 33500 / DSM 1411 / JCM 8866 / NBRC 14739 / NCIMB 2177 / R-4</strain>
    </source>
</reference>
<proteinExistence type="evidence at protein level"/>
<keyword id="KW-0903">Direct protein sequencing</keyword>
<keyword id="KW-0378">Hydrolase</keyword>
<keyword id="KW-0645">Protease</keyword>
<keyword id="KW-0964">Secreted</keyword>
<keyword id="KW-0720">Serine protease</keyword>
<keyword id="KW-0732">Signal</keyword>
<keyword id="KW-0865">Zymogen</keyword>
<sequence>MAGTPNFDRRSFLRLAAAAGLTGMAGVTSATPGRSPGPKKDEILVGVTSTADSPRKAVADAVPGNAEIVHENETLSYAAVKFPSKAPKQARENFISAITKRDEVKYAEKNATHEALYTANDPKYGSQYAPQQVNADSAWDTTLGSSSVKIAVVDQGVKYDHPDLSSQFGSNKGRDFVDNDGDPYPDLLSDEYHGTHVAGIAAGTTDNNEGIGGISNSTLLSGRALSESGSGSTSDIADAIEWAADQGADVINLSLGGGGYSSTMKNAVSYATQQGSLVVAAAGNDGRQSVSYPAAYSECVAVSALDPDETLASYSNYGSEIDLAAPGTNVLSCWTTSTEYNEISGTSMATPVVSGVAGLALAVHNLSPADLRNHLKNTAVDIGLSSTKQGSGRVDAANAVTTDPGDGGGGGGGGSKETTYDGTLSSSSDSNCVSHSWNYSSPSQVVIDLSGPSSADFDLYATEGSGTCPTTRSYDYRSWSYDSTEQIVIDNPDTSADLGILVDSYSGSGSYTVTITEKE</sequence>
<evidence type="ECO:0000250" key="1"/>
<evidence type="ECO:0000255" key="2">
    <source>
        <dbReference type="PROSITE-ProRule" id="PRU00648"/>
    </source>
</evidence>
<evidence type="ECO:0000255" key="3">
    <source>
        <dbReference type="PROSITE-ProRule" id="PRU01240"/>
    </source>
</evidence>
<evidence type="ECO:0000256" key="4">
    <source>
        <dbReference type="SAM" id="MobiDB-lite"/>
    </source>
</evidence>
<evidence type="ECO:0000269" key="5">
    <source>
    </source>
</evidence>
<evidence type="ECO:0000305" key="6"/>